<gene>
    <name type="primary">spc24</name>
    <name type="synonym">spbc24</name>
    <name type="ORF">TEgg077l22.1</name>
</gene>
<name>SPC24_XENTR</name>
<sequence length="199" mass="22870">MLCEQIKEYVDVSREIVKVMVSDSAAVALKKSLDRQEAMIDLLLDTETEASQLIRDFMAVEEKVAQTLLDTEETKQKTSSKLQKIERELQEKIEKNSSLESGIKFLQKELEELKMMEEEIADMEREADEDTTTVIPSAVYLAKLFHNVTKIDWDYNCDPSLIKGIHYGGEIAQPISIDSNQHSKIFICNYLWSLLSTDW</sequence>
<reference key="1">
    <citation type="submission" date="2006-03" db="EMBL/GenBank/DDBJ databases">
        <authorList>
            <consortium name="Sanger Xenopus tropicalis EST/cDNA project"/>
        </authorList>
    </citation>
    <scope>NUCLEOTIDE SEQUENCE [LARGE SCALE MRNA]</scope>
    <source>
        <tissue>Egg</tissue>
    </source>
</reference>
<reference key="2">
    <citation type="submission" date="2003-11" db="EMBL/GenBank/DDBJ databases">
        <authorList>
            <consortium name="NIH - Xenopus Gene Collection (XGC) project"/>
        </authorList>
    </citation>
    <scope>NUCLEOTIDE SEQUENCE [LARGE SCALE MRNA]</scope>
    <source>
        <tissue>Embryo</tissue>
    </source>
</reference>
<organism>
    <name type="scientific">Xenopus tropicalis</name>
    <name type="common">Western clawed frog</name>
    <name type="synonym">Silurana tropicalis</name>
    <dbReference type="NCBI Taxonomy" id="8364"/>
    <lineage>
        <taxon>Eukaryota</taxon>
        <taxon>Metazoa</taxon>
        <taxon>Chordata</taxon>
        <taxon>Craniata</taxon>
        <taxon>Vertebrata</taxon>
        <taxon>Euteleostomi</taxon>
        <taxon>Amphibia</taxon>
        <taxon>Batrachia</taxon>
        <taxon>Anura</taxon>
        <taxon>Pipoidea</taxon>
        <taxon>Pipidae</taxon>
        <taxon>Xenopodinae</taxon>
        <taxon>Xenopus</taxon>
        <taxon>Silurana</taxon>
    </lineage>
</organism>
<keyword id="KW-0131">Cell cycle</keyword>
<keyword id="KW-0132">Cell division</keyword>
<keyword id="KW-0137">Centromere</keyword>
<keyword id="KW-0158">Chromosome</keyword>
<keyword id="KW-0175">Coiled coil</keyword>
<keyword id="KW-0995">Kinetochore</keyword>
<keyword id="KW-0498">Mitosis</keyword>
<keyword id="KW-0539">Nucleus</keyword>
<keyword id="KW-1185">Reference proteome</keyword>
<feature type="chain" id="PRO_0000249563" description="Kinetochore protein spc24">
    <location>
        <begin position="1"/>
        <end position="199"/>
    </location>
</feature>
<feature type="coiled-coil region" evidence="3">
    <location>
        <begin position="46"/>
        <end position="134"/>
    </location>
</feature>
<proteinExistence type="evidence at transcript level"/>
<protein>
    <recommendedName>
        <fullName>Kinetochore protein spc24</fullName>
    </recommendedName>
</protein>
<comment type="function">
    <text evidence="2">Acts as a component of the essential kinetochore-associated NDC80 complex, which is required for chromosome segregation and spindle checkpoint activity. Required for kinetochore integrity and the organization of stable microtubule binding sites in the outer plate of the kinetochore. The NDC80 complex synergistically enhances the affinity of the SKA1 complex for microtubules and may allow the NDC80 complex to track depolymerizing microtubules.</text>
</comment>
<comment type="subunit">
    <text evidence="1">Component of the NDC80 complex, which is composed of ndc80, cdca1, spbc24 and spbc25. The NDC80 complex interacts with mis12 and zwint (By similarity).</text>
</comment>
<comment type="subcellular location">
    <subcellularLocation>
        <location evidence="2">Nucleus</location>
    </subcellularLocation>
    <subcellularLocation>
        <location evidence="2">Chromosome</location>
        <location evidence="2">Centromere</location>
        <location evidence="2">Kinetochore</location>
    </subcellularLocation>
    <text evidence="2">Localizes to kinetochores from late prophase to anaphase. Localizes specifically to the outer plate of the kinetochore.</text>
</comment>
<comment type="similarity">
    <text evidence="4">Belongs to the SPC24 family.</text>
</comment>
<accession>Q6P8A1</accession>
<dbReference type="EMBL" id="CR761127">
    <property type="protein sequence ID" value="CAJ81671.1"/>
    <property type="molecule type" value="mRNA"/>
</dbReference>
<dbReference type="EMBL" id="BC061328">
    <property type="protein sequence ID" value="AAH61328.1"/>
    <property type="molecule type" value="mRNA"/>
</dbReference>
<dbReference type="RefSeq" id="NP_989057.1">
    <property type="nucleotide sequence ID" value="NM_203726.1"/>
</dbReference>
<dbReference type="RefSeq" id="XP_031753642.1">
    <property type="nucleotide sequence ID" value="XM_031897782.1"/>
</dbReference>
<dbReference type="SMR" id="Q6P8A1"/>
<dbReference type="FunCoup" id="Q6P8A1">
    <property type="interactions" value="1127"/>
</dbReference>
<dbReference type="STRING" id="8364.ENSXETP00000028819"/>
<dbReference type="PaxDb" id="8364-ENSXETP00000057635"/>
<dbReference type="DNASU" id="394654"/>
<dbReference type="GeneID" id="394654"/>
<dbReference type="KEGG" id="xtr:394654"/>
<dbReference type="AGR" id="Xenbase:XB-GENE-974559"/>
<dbReference type="CTD" id="147841"/>
<dbReference type="Xenbase" id="XB-GENE-974559">
    <property type="gene designation" value="spc24"/>
</dbReference>
<dbReference type="eggNOG" id="ENOG502S26V">
    <property type="taxonomic scope" value="Eukaryota"/>
</dbReference>
<dbReference type="InParanoid" id="Q6P8A1"/>
<dbReference type="OMA" id="DQLWDFV"/>
<dbReference type="OrthoDB" id="6432863at2759"/>
<dbReference type="Reactome" id="R-XTR-141444">
    <property type="pathway name" value="Amplification of signal from unattached kinetochores via a MAD2 inhibitory signal"/>
</dbReference>
<dbReference type="Reactome" id="R-XTR-2467813">
    <property type="pathway name" value="Separation of Sister Chromatids"/>
</dbReference>
<dbReference type="Reactome" id="R-XTR-2500257">
    <property type="pathway name" value="Resolution of Sister Chromatid Cohesion"/>
</dbReference>
<dbReference type="Reactome" id="R-XTR-5663220">
    <property type="pathway name" value="RHO GTPases Activate Formins"/>
</dbReference>
<dbReference type="Reactome" id="R-XTR-68877">
    <property type="pathway name" value="Mitotic Prometaphase"/>
</dbReference>
<dbReference type="Reactome" id="R-XTR-9648025">
    <property type="pathway name" value="EML4 and NUDC in mitotic spindle formation"/>
</dbReference>
<dbReference type="Proteomes" id="UP000008143">
    <property type="component" value="Chromosome 3"/>
</dbReference>
<dbReference type="GO" id="GO:0031262">
    <property type="term" value="C:Ndc80 complex"/>
    <property type="evidence" value="ECO:0000250"/>
    <property type="project" value="UniProtKB"/>
</dbReference>
<dbReference type="GO" id="GO:0005634">
    <property type="term" value="C:nucleus"/>
    <property type="evidence" value="ECO:0007669"/>
    <property type="project" value="UniProtKB-SubCell"/>
</dbReference>
<dbReference type="GO" id="GO:0051301">
    <property type="term" value="P:cell division"/>
    <property type="evidence" value="ECO:0007669"/>
    <property type="project" value="UniProtKB-KW"/>
</dbReference>
<dbReference type="CDD" id="cd11565">
    <property type="entry name" value="RWD_Spc24"/>
    <property type="match status" value="1"/>
</dbReference>
<dbReference type="FunFam" id="3.30.160.570:FF:000001">
    <property type="entry name" value="SPC24, NDC80 kinetochore complex component"/>
    <property type="match status" value="1"/>
</dbReference>
<dbReference type="Gene3D" id="3.30.160.570">
    <property type="entry name" value="Ncd80 complex, Spc24 subunit"/>
    <property type="match status" value="1"/>
</dbReference>
<dbReference type="InterPro" id="IPR013252">
    <property type="entry name" value="Ndc80_Spc24"/>
</dbReference>
<dbReference type="PANTHER" id="PTHR22142">
    <property type="match status" value="1"/>
</dbReference>
<dbReference type="PANTHER" id="PTHR22142:SF2">
    <property type="entry name" value="KINETOCHORE PROTEIN SPC24"/>
    <property type="match status" value="1"/>
</dbReference>
<dbReference type="Pfam" id="PF08286">
    <property type="entry name" value="Spc24"/>
    <property type="match status" value="1"/>
</dbReference>
<evidence type="ECO:0000250" key="1"/>
<evidence type="ECO:0000250" key="2">
    <source>
        <dbReference type="UniProtKB" id="Q8NBT2"/>
    </source>
</evidence>
<evidence type="ECO:0000255" key="3"/>
<evidence type="ECO:0000305" key="4"/>